<protein>
    <recommendedName>
        <fullName evidence="1">Small ribosomal subunit protein uS3</fullName>
    </recommendedName>
    <alternativeName>
        <fullName evidence="2">30S ribosomal protein S3</fullName>
    </alternativeName>
</protein>
<sequence length="235" mass="26927">MGQKVHPNGMRLGIIKHWNSVWFSNSKDFAKILDSDYQVRLFLRKELFKASVSRIVIERPSKSIRVTIYSARPGIVIGKKGEDVEKLRLSITNITGVPTQINIAEIRKPELDAKLVADNIVSQLERRIMFRRAMKRAVQNAMRQGAKGIKVEISGRLGGTEIARREWYREGRVPLHTLRADIEYNVSEAHTTYGVIGVKVWIFKGEILGGIGSIPKIEKQKPMSQLKKHQRRYRK</sequence>
<gene>
    <name evidence="1" type="primary">rpsC</name>
    <name type="ordered locus">bbp_461</name>
</gene>
<comment type="function">
    <text evidence="1">Binds the lower part of the 30S subunit head. Binds mRNA in the 70S ribosome, positioning it for translation.</text>
</comment>
<comment type="subunit">
    <text evidence="1">Part of the 30S ribosomal subunit. Forms a tight complex with proteins S10 and S14.</text>
</comment>
<comment type="similarity">
    <text evidence="1">Belongs to the universal ribosomal protein uS3 family.</text>
</comment>
<organism>
    <name type="scientific">Buchnera aphidicola subsp. Baizongia pistaciae (strain Bp)</name>
    <dbReference type="NCBI Taxonomy" id="224915"/>
    <lineage>
        <taxon>Bacteria</taxon>
        <taxon>Pseudomonadati</taxon>
        <taxon>Pseudomonadota</taxon>
        <taxon>Gammaproteobacteria</taxon>
        <taxon>Enterobacterales</taxon>
        <taxon>Erwiniaceae</taxon>
        <taxon>Buchnera</taxon>
    </lineage>
</organism>
<reference key="1">
    <citation type="journal article" date="2003" name="Proc. Natl. Acad. Sci. U.S.A.">
        <title>Reductive genome evolution in Buchnera aphidicola.</title>
        <authorList>
            <person name="van Ham R.C.H.J."/>
            <person name="Kamerbeek J."/>
            <person name="Palacios C."/>
            <person name="Rausell C."/>
            <person name="Abascal F."/>
            <person name="Bastolla U."/>
            <person name="Fernandez J.M."/>
            <person name="Jimenez L."/>
            <person name="Postigo M."/>
            <person name="Silva F.J."/>
            <person name="Tamames J."/>
            <person name="Viguera E."/>
            <person name="Latorre A."/>
            <person name="Valencia A."/>
            <person name="Moran F."/>
            <person name="Moya A."/>
        </authorList>
    </citation>
    <scope>NUCLEOTIDE SEQUENCE [LARGE SCALE GENOMIC DNA]</scope>
    <source>
        <strain>Bp</strain>
    </source>
</reference>
<name>RS3_BUCBP</name>
<accession>P59447</accession>
<keyword id="KW-1185">Reference proteome</keyword>
<keyword id="KW-0687">Ribonucleoprotein</keyword>
<keyword id="KW-0689">Ribosomal protein</keyword>
<keyword id="KW-0694">RNA-binding</keyword>
<keyword id="KW-0699">rRNA-binding</keyword>
<evidence type="ECO:0000255" key="1">
    <source>
        <dbReference type="HAMAP-Rule" id="MF_01309"/>
    </source>
</evidence>
<evidence type="ECO:0000305" key="2"/>
<feature type="chain" id="PRO_0000130090" description="Small ribosomal subunit protein uS3">
    <location>
        <begin position="1"/>
        <end position="235"/>
    </location>
</feature>
<feature type="domain" description="KH type-2" evidence="1">
    <location>
        <begin position="39"/>
        <end position="107"/>
    </location>
</feature>
<dbReference type="EMBL" id="AE016826">
    <property type="protein sequence ID" value="AAO27167.1"/>
    <property type="molecule type" value="Genomic_DNA"/>
</dbReference>
<dbReference type="RefSeq" id="WP_011091568.1">
    <property type="nucleotide sequence ID" value="NC_004545.1"/>
</dbReference>
<dbReference type="SMR" id="P59447"/>
<dbReference type="STRING" id="224915.bbp_461"/>
<dbReference type="KEGG" id="bab:bbp_461"/>
<dbReference type="eggNOG" id="COG0092">
    <property type="taxonomic scope" value="Bacteria"/>
</dbReference>
<dbReference type="HOGENOM" id="CLU_058591_0_2_6"/>
<dbReference type="OrthoDB" id="9806396at2"/>
<dbReference type="Proteomes" id="UP000000601">
    <property type="component" value="Chromosome"/>
</dbReference>
<dbReference type="GO" id="GO:0022627">
    <property type="term" value="C:cytosolic small ribosomal subunit"/>
    <property type="evidence" value="ECO:0007669"/>
    <property type="project" value="TreeGrafter"/>
</dbReference>
<dbReference type="GO" id="GO:0003729">
    <property type="term" value="F:mRNA binding"/>
    <property type="evidence" value="ECO:0007669"/>
    <property type="project" value="UniProtKB-UniRule"/>
</dbReference>
<dbReference type="GO" id="GO:0019843">
    <property type="term" value="F:rRNA binding"/>
    <property type="evidence" value="ECO:0007669"/>
    <property type="project" value="UniProtKB-UniRule"/>
</dbReference>
<dbReference type="GO" id="GO:0003735">
    <property type="term" value="F:structural constituent of ribosome"/>
    <property type="evidence" value="ECO:0007669"/>
    <property type="project" value="InterPro"/>
</dbReference>
<dbReference type="GO" id="GO:0006412">
    <property type="term" value="P:translation"/>
    <property type="evidence" value="ECO:0007669"/>
    <property type="project" value="UniProtKB-UniRule"/>
</dbReference>
<dbReference type="CDD" id="cd02412">
    <property type="entry name" value="KH-II_30S_S3"/>
    <property type="match status" value="1"/>
</dbReference>
<dbReference type="FunFam" id="3.30.1140.32:FF:000001">
    <property type="entry name" value="30S ribosomal protein S3"/>
    <property type="match status" value="1"/>
</dbReference>
<dbReference type="FunFam" id="3.30.300.20:FF:000001">
    <property type="entry name" value="30S ribosomal protein S3"/>
    <property type="match status" value="1"/>
</dbReference>
<dbReference type="Gene3D" id="3.30.300.20">
    <property type="match status" value="1"/>
</dbReference>
<dbReference type="Gene3D" id="3.30.1140.32">
    <property type="entry name" value="Ribosomal protein S3, C-terminal domain"/>
    <property type="match status" value="1"/>
</dbReference>
<dbReference type="HAMAP" id="MF_01309_B">
    <property type="entry name" value="Ribosomal_uS3_B"/>
    <property type="match status" value="1"/>
</dbReference>
<dbReference type="InterPro" id="IPR004087">
    <property type="entry name" value="KH_dom"/>
</dbReference>
<dbReference type="InterPro" id="IPR015946">
    <property type="entry name" value="KH_dom-like_a/b"/>
</dbReference>
<dbReference type="InterPro" id="IPR004044">
    <property type="entry name" value="KH_dom_type_2"/>
</dbReference>
<dbReference type="InterPro" id="IPR009019">
    <property type="entry name" value="KH_sf_prok-type"/>
</dbReference>
<dbReference type="InterPro" id="IPR036419">
    <property type="entry name" value="Ribosomal_S3_C_sf"/>
</dbReference>
<dbReference type="InterPro" id="IPR005704">
    <property type="entry name" value="Ribosomal_uS3_bac-typ"/>
</dbReference>
<dbReference type="InterPro" id="IPR001351">
    <property type="entry name" value="Ribosomal_uS3_C"/>
</dbReference>
<dbReference type="InterPro" id="IPR018280">
    <property type="entry name" value="Ribosomal_uS3_CS"/>
</dbReference>
<dbReference type="NCBIfam" id="TIGR01009">
    <property type="entry name" value="rpsC_bact"/>
    <property type="match status" value="1"/>
</dbReference>
<dbReference type="PANTHER" id="PTHR11760">
    <property type="entry name" value="30S/40S RIBOSOMAL PROTEIN S3"/>
    <property type="match status" value="1"/>
</dbReference>
<dbReference type="PANTHER" id="PTHR11760:SF19">
    <property type="entry name" value="SMALL RIBOSOMAL SUBUNIT PROTEIN US3C"/>
    <property type="match status" value="1"/>
</dbReference>
<dbReference type="Pfam" id="PF07650">
    <property type="entry name" value="KH_2"/>
    <property type="match status" value="1"/>
</dbReference>
<dbReference type="Pfam" id="PF00189">
    <property type="entry name" value="Ribosomal_S3_C"/>
    <property type="match status" value="1"/>
</dbReference>
<dbReference type="SMART" id="SM00322">
    <property type="entry name" value="KH"/>
    <property type="match status" value="1"/>
</dbReference>
<dbReference type="SUPFAM" id="SSF54814">
    <property type="entry name" value="Prokaryotic type KH domain (KH-domain type II)"/>
    <property type="match status" value="1"/>
</dbReference>
<dbReference type="SUPFAM" id="SSF54821">
    <property type="entry name" value="Ribosomal protein S3 C-terminal domain"/>
    <property type="match status" value="1"/>
</dbReference>
<dbReference type="PROSITE" id="PS50823">
    <property type="entry name" value="KH_TYPE_2"/>
    <property type="match status" value="1"/>
</dbReference>
<dbReference type="PROSITE" id="PS00548">
    <property type="entry name" value="RIBOSOMAL_S3"/>
    <property type="match status" value="1"/>
</dbReference>
<proteinExistence type="inferred from homology"/>